<keyword id="KW-0044">Antibiotic</keyword>
<keyword id="KW-0929">Antimicrobial</keyword>
<keyword id="KW-0078">Bacteriocin</keyword>
<keyword id="KW-0903">Direct protein sequencing</keyword>
<keyword id="KW-0425">Lantibiotic</keyword>
<keyword id="KW-0614">Plasmid</keyword>
<keyword id="KW-0964">Secreted</keyword>
<keyword id="KW-0883">Thioether bond</keyword>
<name>LANA1_LACLL</name>
<geneLocation type="plasmid" evidence="6">
    <name>pMRC01</name>
</geneLocation>
<geneLocation type="plasmid" evidence="7">
    <name>pBAC105</name>
</geneLocation>
<reference evidence="6" key="1">
    <citation type="journal article" date="1998" name="Mol. Microbiol.">
        <title>Sequence and analysis of the 60 kb conjugative, bacteriocin-producing plasmid pMRC01 from Lactococcus lactis DPC3147.</title>
        <authorList>
            <person name="Dougherty B.A."/>
            <person name="Hill C."/>
            <person name="Weidman J.F."/>
            <person name="Richardson D.R."/>
            <person name="Venter J.C."/>
            <person name="Ross R.P."/>
        </authorList>
    </citation>
    <scope>NUCLEOTIDE SEQUENCE [GENOMIC DNA]</scope>
    <source>
        <strain evidence="6">DPC3147</strain>
        <plasmid>pMRC01</plasmid>
    </source>
</reference>
<reference evidence="5 7" key="2">
    <citation type="journal article" date="2000" name="J. Appl. Microbiol.">
        <title>Biological and molecular characterization of a two-peptide lantibiotic produced by Lactococcus lactis IFPL105.</title>
        <authorList>
            <person name="Martinez-Cuesta M.C."/>
            <person name="Buist G."/>
            <person name="Kok J."/>
            <person name="Hauge H.H."/>
            <person name="Nissen-Meyer J."/>
            <person name="Pelaez C."/>
            <person name="Requena T."/>
        </authorList>
    </citation>
    <scope>NUCLEOTIDE SEQUENCE [GENOMIC DNA]</scope>
    <scope>FUNCTION</scope>
    <scope>SUBCELLULAR LOCATION</scope>
    <scope>MASS SPECTROMETRY</scope>
    <source>
        <strain evidence="7">IFPL105</strain>
        <plasmid>pBAC105</plasmid>
    </source>
</reference>
<reference evidence="5" key="3">
    <citation type="journal article" date="2004" name="Biochemistry">
        <title>Structural characterization of lacticin 3147, a two-peptide lantibiotic with synergistic activity.</title>
        <authorList>
            <person name="Martin N.I."/>
            <person name="Sprules T."/>
            <person name="Carpenter M.R."/>
            <person name="Cotter P.D."/>
            <person name="Hill C."/>
            <person name="Ross R.P."/>
            <person name="Vederas J.C."/>
        </authorList>
    </citation>
    <scope>PROTEIN SEQUENCE OF 30-59</scope>
    <scope>MASS SPECTROMETRY</scope>
    <scope>THIOETHER BONDS</scope>
    <scope>DEHYDRATION AT THR-32; THR-34 AND SER-36</scope>
    <source>
        <strain evidence="3">DPC3147</strain>
    </source>
</reference>
<reference evidence="5" key="4">
    <citation type="journal article" date="1999" name="J. Biol. Chem.">
        <title>Extensive post-translational modification, including serine to D-alanine conversion, in the two-component lantibiotic, lacticin 3147.</title>
        <authorList>
            <person name="Ryan M.P."/>
            <person name="Jack R.W."/>
            <person name="Josten M."/>
            <person name="Sahl H.-G."/>
            <person name="Jung G."/>
            <person name="Ross R.P."/>
            <person name="Hill C."/>
        </authorList>
    </citation>
    <scope>PROTEIN SEQUENCE OF 30-47</scope>
    <scope>FUNCTION</scope>
    <scope>SUBCELLULAR LOCATION</scope>
    <scope>MASS SPECTROMETRY</scope>
    <source>
        <strain evidence="1">DPC3147</strain>
    </source>
</reference>
<feature type="propeptide" id="PRO_0000042849" evidence="1 3">
    <location>
        <begin position="1"/>
        <end position="29"/>
    </location>
</feature>
<feature type="peptide" id="PRO_0000042850" description="Lantibiotic lacticin 3147 A1" evidence="3">
    <location>
        <begin position="30"/>
        <end position="59"/>
    </location>
</feature>
<feature type="modified residue" description="2,3-didehydrobutyrine" evidence="3">
    <location>
        <position position="32"/>
    </location>
</feature>
<feature type="modified residue" description="2,3-didehydrobutyrine" evidence="3">
    <location>
        <position position="34"/>
    </location>
</feature>
<feature type="modified residue" description="2,3-didehydroalanine (Ser)" evidence="3">
    <location>
        <position position="36"/>
    </location>
</feature>
<feature type="cross-link" description="Lanthionine (Cys-Ser)" evidence="3">
    <location>
        <begin position="30"/>
        <end position="31"/>
    </location>
</feature>
<feature type="cross-link" description="Lanthionine (Ser-Cys)" evidence="3">
    <location>
        <begin position="38"/>
        <end position="48"/>
    </location>
</feature>
<feature type="cross-link" description="Beta-methyllanthionine (Thr-Cys)" evidence="3">
    <location>
        <begin position="49"/>
        <end position="54"/>
    </location>
</feature>
<feature type="cross-link" description="Beta-methyllanthionine (Thr-Cys)" evidence="3">
    <location>
        <begin position="51"/>
        <end position="58"/>
    </location>
</feature>
<accession>O87236</accession>
<protein>
    <recommendedName>
        <fullName>Lantibiotic lacticin 3147 A1</fullName>
    </recommendedName>
</protein>
<dbReference type="EMBL" id="AE001272">
    <property type="protein sequence ID" value="AAC56053.1"/>
    <property type="molecule type" value="Genomic_DNA"/>
</dbReference>
<dbReference type="EMBL" id="AF167432">
    <property type="protein sequence ID" value="AAF32256.1"/>
    <property type="molecule type" value="Genomic_DNA"/>
</dbReference>
<dbReference type="PIR" id="T43106">
    <property type="entry name" value="T43106"/>
</dbReference>
<dbReference type="RefSeq" id="NP_047319.1">
    <property type="nucleotide sequence ID" value="NC_001949.1"/>
</dbReference>
<dbReference type="TCDB" id="1.C.21.2.4">
    <property type="family name" value="the lacticin 481 (lacticin 481) family"/>
</dbReference>
<dbReference type="GO" id="GO:0005576">
    <property type="term" value="C:extracellular region"/>
    <property type="evidence" value="ECO:0000314"/>
    <property type="project" value="UniProtKB"/>
</dbReference>
<dbReference type="GO" id="GO:0005102">
    <property type="term" value="F:signaling receptor binding"/>
    <property type="evidence" value="ECO:0007669"/>
    <property type="project" value="UniProtKB-KW"/>
</dbReference>
<dbReference type="GO" id="GO:0050830">
    <property type="term" value="P:defense response to Gram-positive bacterium"/>
    <property type="evidence" value="ECO:0000314"/>
    <property type="project" value="UniProtKB"/>
</dbReference>
<dbReference type="GO" id="GO:0031640">
    <property type="term" value="P:killing of cells of another organism"/>
    <property type="evidence" value="ECO:0007669"/>
    <property type="project" value="UniProtKB-KW"/>
</dbReference>
<dbReference type="InterPro" id="IPR029243">
    <property type="entry name" value="Lantibiotic_alpha"/>
</dbReference>
<dbReference type="NCBIfam" id="NF000539">
    <property type="entry name" value="plantaricin"/>
    <property type="match status" value="1"/>
</dbReference>
<dbReference type="Pfam" id="PF14867">
    <property type="entry name" value="Lantibiotic_a"/>
    <property type="match status" value="1"/>
</dbReference>
<organism>
    <name type="scientific">Lactococcus lactis subsp. lactis</name>
    <name type="common">Streptococcus lactis</name>
    <dbReference type="NCBI Taxonomy" id="1360"/>
    <lineage>
        <taxon>Bacteria</taxon>
        <taxon>Bacillati</taxon>
        <taxon>Bacillota</taxon>
        <taxon>Bacilli</taxon>
        <taxon>Lactobacillales</taxon>
        <taxon>Streptococcaceae</taxon>
        <taxon>Lactococcus</taxon>
    </lineage>
</organism>
<evidence type="ECO:0000269" key="1">
    <source>
    </source>
</evidence>
<evidence type="ECO:0000269" key="2">
    <source>
    </source>
</evidence>
<evidence type="ECO:0000269" key="3">
    <source>
    </source>
</evidence>
<evidence type="ECO:0000303" key="4">
    <source>
    </source>
</evidence>
<evidence type="ECO:0000305" key="5"/>
<evidence type="ECO:0000312" key="6">
    <source>
        <dbReference type="EMBL" id="AAC56053.1"/>
    </source>
</evidence>
<evidence type="ECO:0000312" key="7">
    <source>
        <dbReference type="EMBL" id="AAF32256.1"/>
    </source>
</evidence>
<comment type="function">
    <text evidence="1 2">Lanthionine-containing peptide antibiotic (lantibiotic) active on Gram-positive bacteria. The bactericidal activity of lantibiotics is based on depolarization of energized bacterial cytoplasmic membranes, initiated by the formation of aqueous transmembrane pores. When present individually lacticin 3147 A1 exhibits strong activity towards L.lactis strain AM2, weak activity towards L.lactis strain HP and no activity towards L.lactis strain IFPL359, but when combined with lacticin 3147 A2 it displays strong activity towards all three strains.</text>
</comment>
<comment type="subcellular location">
    <subcellularLocation>
        <location evidence="1 2">Secreted</location>
    </subcellularLocation>
</comment>
<comment type="PTM">
    <text evidence="3">Maturation of lantibiotics involves the enzymatic conversion of Thr, and Ser into dehydrated AA and the formation of thioether bonds with cysteine. This is followed by membrane translocation and cleavage of the modified precursor.</text>
</comment>
<comment type="PTM">
    <text>It is not established whether the 2,3-didehydrobutyrines are the E- or Z-isomers (PubMed:10608807, PubMed:15023056). In the NMR model they were assumed to be the Z-isomer.</text>
</comment>
<comment type="mass spectrometry"/>
<comment type="mass spectrometry"/>
<comment type="mass spectrometry"/>
<sequence>MNKNEIETQPVTWLEEVSDQNFDEDVFGACSTNTFSLSDYWGNNGAWCTLTHECMAWCK</sequence>
<proteinExistence type="evidence at protein level"/>
<gene>
    <name evidence="4" type="primary">ltnA1</name>
    <name evidence="7" type="synonym">ltnA</name>
    <name type="ORF">ORF00035</name>
</gene>